<reference key="1">
    <citation type="submission" date="2007-11" db="EMBL/GenBank/DDBJ databases">
        <title>Complete sequence of chromosome of Shewanella baltica OS195.</title>
        <authorList>
            <consortium name="US DOE Joint Genome Institute"/>
            <person name="Copeland A."/>
            <person name="Lucas S."/>
            <person name="Lapidus A."/>
            <person name="Barry K."/>
            <person name="Glavina del Rio T."/>
            <person name="Dalin E."/>
            <person name="Tice H."/>
            <person name="Pitluck S."/>
            <person name="Chain P."/>
            <person name="Malfatti S."/>
            <person name="Shin M."/>
            <person name="Vergez L."/>
            <person name="Schmutz J."/>
            <person name="Larimer F."/>
            <person name="Land M."/>
            <person name="Hauser L."/>
            <person name="Kyrpides N."/>
            <person name="Kim E."/>
            <person name="Brettar I."/>
            <person name="Rodrigues J."/>
            <person name="Konstantinidis K."/>
            <person name="Klappenbach J."/>
            <person name="Hofle M."/>
            <person name="Tiedje J."/>
            <person name="Richardson P."/>
        </authorList>
    </citation>
    <scope>NUCLEOTIDE SEQUENCE [LARGE SCALE GENOMIC DNA]</scope>
    <source>
        <strain>OS195</strain>
    </source>
</reference>
<evidence type="ECO:0000255" key="1">
    <source>
        <dbReference type="HAMAP-Rule" id="MF_01540"/>
    </source>
</evidence>
<name>CYSI_SHEB9</name>
<comment type="function">
    <text evidence="1">Component of the sulfite reductase complex that catalyzes the 6-electron reduction of sulfite to sulfide. This is one of several activities required for the biosynthesis of L-cysteine from sulfate.</text>
</comment>
<comment type="catalytic activity">
    <reaction evidence="1">
        <text>hydrogen sulfide + 3 NADP(+) + 3 H2O = sulfite + 3 NADPH + 4 H(+)</text>
        <dbReference type="Rhea" id="RHEA:13801"/>
        <dbReference type="ChEBI" id="CHEBI:15377"/>
        <dbReference type="ChEBI" id="CHEBI:15378"/>
        <dbReference type="ChEBI" id="CHEBI:17359"/>
        <dbReference type="ChEBI" id="CHEBI:29919"/>
        <dbReference type="ChEBI" id="CHEBI:57783"/>
        <dbReference type="ChEBI" id="CHEBI:58349"/>
        <dbReference type="EC" id="1.8.1.2"/>
    </reaction>
</comment>
<comment type="cofactor">
    <cofactor evidence="1">
        <name>siroheme</name>
        <dbReference type="ChEBI" id="CHEBI:60052"/>
    </cofactor>
    <text evidence="1">Binds 1 siroheme per subunit.</text>
</comment>
<comment type="cofactor">
    <cofactor evidence="1">
        <name>[4Fe-4S] cluster</name>
        <dbReference type="ChEBI" id="CHEBI:49883"/>
    </cofactor>
    <text evidence="1">Binds 1 [4Fe-4S] cluster per subunit.</text>
</comment>
<comment type="pathway">
    <text evidence="1">Sulfur metabolism; hydrogen sulfide biosynthesis; hydrogen sulfide from sulfite (NADPH route): step 1/1.</text>
</comment>
<comment type="subunit">
    <text evidence="1">Alpha(8)-beta(8). The alpha component is a flavoprotein, the beta component is a hemoprotein.</text>
</comment>
<comment type="similarity">
    <text evidence="1">Belongs to the nitrite and sulfite reductase 4Fe-4S domain family.</text>
</comment>
<dbReference type="EC" id="1.8.1.2" evidence="1"/>
<dbReference type="EMBL" id="CP000891">
    <property type="protein sequence ID" value="ABX48130.1"/>
    <property type="molecule type" value="Genomic_DNA"/>
</dbReference>
<dbReference type="RefSeq" id="WP_006085931.1">
    <property type="nucleotide sequence ID" value="NC_009997.1"/>
</dbReference>
<dbReference type="SMR" id="A9L2P8"/>
<dbReference type="GeneID" id="11771253"/>
<dbReference type="KEGG" id="sbn:Sbal195_0954"/>
<dbReference type="HOGENOM" id="CLU_001975_3_2_6"/>
<dbReference type="UniPathway" id="UPA00140">
    <property type="reaction ID" value="UER00207"/>
</dbReference>
<dbReference type="Proteomes" id="UP000000770">
    <property type="component" value="Chromosome"/>
</dbReference>
<dbReference type="GO" id="GO:0009337">
    <property type="term" value="C:sulfite reductase complex (NADPH)"/>
    <property type="evidence" value="ECO:0007669"/>
    <property type="project" value="InterPro"/>
</dbReference>
<dbReference type="GO" id="GO:0051539">
    <property type="term" value="F:4 iron, 4 sulfur cluster binding"/>
    <property type="evidence" value="ECO:0007669"/>
    <property type="project" value="UniProtKB-KW"/>
</dbReference>
<dbReference type="GO" id="GO:0020037">
    <property type="term" value="F:heme binding"/>
    <property type="evidence" value="ECO:0007669"/>
    <property type="project" value="InterPro"/>
</dbReference>
<dbReference type="GO" id="GO:0046872">
    <property type="term" value="F:metal ion binding"/>
    <property type="evidence" value="ECO:0007669"/>
    <property type="project" value="UniProtKB-KW"/>
</dbReference>
<dbReference type="GO" id="GO:0050661">
    <property type="term" value="F:NADP binding"/>
    <property type="evidence" value="ECO:0007669"/>
    <property type="project" value="InterPro"/>
</dbReference>
<dbReference type="GO" id="GO:0050311">
    <property type="term" value="F:sulfite reductase (ferredoxin) activity"/>
    <property type="evidence" value="ECO:0007669"/>
    <property type="project" value="TreeGrafter"/>
</dbReference>
<dbReference type="GO" id="GO:0004783">
    <property type="term" value="F:sulfite reductase (NADPH) activity"/>
    <property type="evidence" value="ECO:0007669"/>
    <property type="project" value="UniProtKB-UniRule"/>
</dbReference>
<dbReference type="GO" id="GO:0019344">
    <property type="term" value="P:cysteine biosynthetic process"/>
    <property type="evidence" value="ECO:0007669"/>
    <property type="project" value="UniProtKB-KW"/>
</dbReference>
<dbReference type="GO" id="GO:0070814">
    <property type="term" value="P:hydrogen sulfide biosynthetic process"/>
    <property type="evidence" value="ECO:0007669"/>
    <property type="project" value="UniProtKB-UniRule"/>
</dbReference>
<dbReference type="GO" id="GO:0000103">
    <property type="term" value="P:sulfate assimilation"/>
    <property type="evidence" value="ECO:0007669"/>
    <property type="project" value="UniProtKB-UniRule"/>
</dbReference>
<dbReference type="FunFam" id="3.30.413.10:FF:000003">
    <property type="entry name" value="Sulfite reductase [NADPH] hemoprotein beta-component"/>
    <property type="match status" value="1"/>
</dbReference>
<dbReference type="FunFam" id="3.30.413.10:FF:000004">
    <property type="entry name" value="Sulfite reductase [NADPH] hemoprotein beta-component"/>
    <property type="match status" value="1"/>
</dbReference>
<dbReference type="Gene3D" id="3.30.413.10">
    <property type="entry name" value="Sulfite Reductase Hemoprotein, domain 1"/>
    <property type="match status" value="2"/>
</dbReference>
<dbReference type="HAMAP" id="MF_01540">
    <property type="entry name" value="CysI"/>
    <property type="match status" value="1"/>
</dbReference>
<dbReference type="InterPro" id="IPR011786">
    <property type="entry name" value="CysI"/>
</dbReference>
<dbReference type="InterPro" id="IPR005117">
    <property type="entry name" value="NiRdtase/SiRdtase_haem-b_fer"/>
</dbReference>
<dbReference type="InterPro" id="IPR036136">
    <property type="entry name" value="Nit/Sulf_reduc_fer-like_dom_sf"/>
</dbReference>
<dbReference type="InterPro" id="IPR006067">
    <property type="entry name" value="NO2/SO3_Rdtase_4Fe4S_dom"/>
</dbReference>
<dbReference type="InterPro" id="IPR045169">
    <property type="entry name" value="NO2/SO3_Rdtase_4Fe4S_prot"/>
</dbReference>
<dbReference type="InterPro" id="IPR045854">
    <property type="entry name" value="NO2/SO3_Rdtase_4Fe4S_sf"/>
</dbReference>
<dbReference type="InterPro" id="IPR006066">
    <property type="entry name" value="NO2/SO3_Rdtase_FeS/sirohaem_BS"/>
</dbReference>
<dbReference type="NCBIfam" id="TIGR02041">
    <property type="entry name" value="CysI"/>
    <property type="match status" value="1"/>
</dbReference>
<dbReference type="NCBIfam" id="NF010029">
    <property type="entry name" value="PRK13504.1"/>
    <property type="match status" value="1"/>
</dbReference>
<dbReference type="PANTHER" id="PTHR11493:SF47">
    <property type="entry name" value="SULFITE REDUCTASE [NADPH] SUBUNIT BETA"/>
    <property type="match status" value="1"/>
</dbReference>
<dbReference type="PANTHER" id="PTHR11493">
    <property type="entry name" value="SULFITE REDUCTASE [NADPH] SUBUNIT BETA-RELATED"/>
    <property type="match status" value="1"/>
</dbReference>
<dbReference type="Pfam" id="PF01077">
    <property type="entry name" value="NIR_SIR"/>
    <property type="match status" value="1"/>
</dbReference>
<dbReference type="Pfam" id="PF03460">
    <property type="entry name" value="NIR_SIR_ferr"/>
    <property type="match status" value="2"/>
</dbReference>
<dbReference type="PRINTS" id="PR00397">
    <property type="entry name" value="SIROHAEM"/>
</dbReference>
<dbReference type="SUPFAM" id="SSF56014">
    <property type="entry name" value="Nitrite and sulphite reductase 4Fe-4S domain-like"/>
    <property type="match status" value="2"/>
</dbReference>
<dbReference type="SUPFAM" id="SSF55124">
    <property type="entry name" value="Nitrite/Sulfite reductase N-terminal domain-like"/>
    <property type="match status" value="2"/>
</dbReference>
<dbReference type="PROSITE" id="PS00365">
    <property type="entry name" value="NIR_SIR"/>
    <property type="match status" value="1"/>
</dbReference>
<keyword id="KW-0004">4Fe-4S</keyword>
<keyword id="KW-0028">Amino-acid biosynthesis</keyword>
<keyword id="KW-0198">Cysteine biosynthesis</keyword>
<keyword id="KW-0349">Heme</keyword>
<keyword id="KW-0408">Iron</keyword>
<keyword id="KW-0411">Iron-sulfur</keyword>
<keyword id="KW-0479">Metal-binding</keyword>
<keyword id="KW-0521">NADP</keyword>
<keyword id="KW-0560">Oxidoreductase</keyword>
<feature type="chain" id="PRO_1000087630" description="Sulfite reductase [NADPH] hemoprotein beta-component">
    <location>
        <begin position="1"/>
        <end position="565"/>
    </location>
</feature>
<feature type="binding site" evidence="1">
    <location>
        <position position="429"/>
    </location>
    <ligand>
        <name>[4Fe-4S] cluster</name>
        <dbReference type="ChEBI" id="CHEBI:49883"/>
    </ligand>
</feature>
<feature type="binding site" evidence="1">
    <location>
        <position position="435"/>
    </location>
    <ligand>
        <name>[4Fe-4S] cluster</name>
        <dbReference type="ChEBI" id="CHEBI:49883"/>
    </ligand>
</feature>
<feature type="binding site" evidence="1">
    <location>
        <position position="474"/>
    </location>
    <ligand>
        <name>[4Fe-4S] cluster</name>
        <dbReference type="ChEBI" id="CHEBI:49883"/>
    </ligand>
</feature>
<feature type="binding site" evidence="1">
    <location>
        <position position="478"/>
    </location>
    <ligand>
        <name>[4Fe-4S] cluster</name>
        <dbReference type="ChEBI" id="CHEBI:49883"/>
    </ligand>
</feature>
<feature type="binding site" description="axial binding residue" evidence="1">
    <location>
        <position position="478"/>
    </location>
    <ligand>
        <name>siroheme</name>
        <dbReference type="ChEBI" id="CHEBI:60052"/>
    </ligand>
    <ligandPart>
        <name>Fe</name>
        <dbReference type="ChEBI" id="CHEBI:18248"/>
    </ligandPart>
</feature>
<proteinExistence type="inferred from homology"/>
<accession>A9L2P8</accession>
<gene>
    <name evidence="1" type="primary">cysI</name>
    <name type="ordered locus">Sbal195_0954</name>
</gene>
<organism>
    <name type="scientific">Shewanella baltica (strain OS195)</name>
    <dbReference type="NCBI Taxonomy" id="399599"/>
    <lineage>
        <taxon>Bacteria</taxon>
        <taxon>Pseudomonadati</taxon>
        <taxon>Pseudomonadota</taxon>
        <taxon>Gammaproteobacteria</taxon>
        <taxon>Alteromonadales</taxon>
        <taxon>Shewanellaceae</taxon>
        <taxon>Shewanella</taxon>
    </lineage>
</organism>
<sequence length="565" mass="63022">MSEQKLALNEYLKTDSDYLRGTIKEGLDSAVTGSFSDGDQQLIKFHGFYQQDDRDLRNERKEQKLEPLYSFMLRARVPGGICSPQQWLGVDKIASTLTSSNSIRLTTRQTFQYHGIPKRNLKTIIQDLDREALDSIAACGDVNRNVMCNPNPVESKLHEQAYAVAKQLSDHLLPHTRAYAEIWLDEEKLLSTEDETVEPVYGKTYLPRKFKMAVAVPPDNDVDVYTNDLGFIAVAENGELVGFNLTAGGGMGSTHGEVETFPRLADDFGFIKTEDVMKFAEAVMTVQRDWGNRVNRKRSRLKYTIVDHGYEKFKAEVELRAGVKFEPKRDVVIGDRGDRYGWVEGVDGKWHLTLFIESGRIKDLPGQTLQTGLREIAKIHKGDFRMTSNQNMIIAGVAAEDKATIEGLARKHGLLGQVLTQTRGHSIACVALPTCPLAMAEAERYFPEFIDHIDALQAKHGISEQAIVVRMTGCPNGCARPFAAEIGLVGKAPGRYNLYLGASFEGTRLNKMHRENIQEAEILAELDTLFGRYAVERDAGETFGNFTVRVGVVKAVIDAAKDFHG</sequence>
<protein>
    <recommendedName>
        <fullName evidence="1">Sulfite reductase [NADPH] hemoprotein beta-component</fullName>
        <shortName evidence="1">SiR-HP</shortName>
        <shortName evidence="1">SiRHP</shortName>
        <ecNumber evidence="1">1.8.1.2</ecNumber>
    </recommendedName>
</protein>